<proteinExistence type="inferred from homology"/>
<comment type="catalytic activity">
    <reaction evidence="1">
        <text>tRNA(Phe) + L-phenylalanine + ATP = L-phenylalanyl-tRNA(Phe) + AMP + diphosphate + H(+)</text>
        <dbReference type="Rhea" id="RHEA:19413"/>
        <dbReference type="Rhea" id="RHEA-COMP:9668"/>
        <dbReference type="Rhea" id="RHEA-COMP:9699"/>
        <dbReference type="ChEBI" id="CHEBI:15378"/>
        <dbReference type="ChEBI" id="CHEBI:30616"/>
        <dbReference type="ChEBI" id="CHEBI:33019"/>
        <dbReference type="ChEBI" id="CHEBI:58095"/>
        <dbReference type="ChEBI" id="CHEBI:78442"/>
        <dbReference type="ChEBI" id="CHEBI:78531"/>
        <dbReference type="ChEBI" id="CHEBI:456215"/>
        <dbReference type="EC" id="6.1.1.20"/>
    </reaction>
</comment>
<comment type="cofactor">
    <cofactor evidence="1">
        <name>Mg(2+)</name>
        <dbReference type="ChEBI" id="CHEBI:18420"/>
    </cofactor>
    <text evidence="1">Binds 2 magnesium ions per tetramer.</text>
</comment>
<comment type="subunit">
    <text evidence="1">Tetramer of two alpha and two beta subunits.</text>
</comment>
<comment type="subcellular location">
    <subcellularLocation>
        <location evidence="1">Cytoplasm</location>
    </subcellularLocation>
</comment>
<comment type="similarity">
    <text evidence="1">Belongs to the class-II aminoacyl-tRNA synthetase family. Phe-tRNA synthetase alpha subunit type 1 subfamily.</text>
</comment>
<evidence type="ECO:0000255" key="1">
    <source>
        <dbReference type="HAMAP-Rule" id="MF_00281"/>
    </source>
</evidence>
<name>SYFA_SALG2</name>
<sequence>MSHLAELVANAAAAINQASDVAALDNVRVEYLGKKGHLTLQMTTLRDLPPEERPAAGAVINAAKEQVQQALNARKAELESAALNARLAAETIDISLPGRRIENGGLHPVTRTIDRIESFFGELGFTVATGPEIEDDYHNFDALNIPGHHPARADHDTFWFDATRLLRTQTSGVQIRTMKAQQPPIRIIAPGRVYRNDYDQTHTPMFHQMEGLIVDTNISFTNLKGTLHDFLRNFFEEDLQIRFRPSYFPFTEPSAEVDVMGKNGKWLEVLGCGMVHPNVLRNVGIDPEIYSGFAFGMGMERLTMLRYGVTDLRSFFENDLRFLKQFK</sequence>
<feature type="chain" id="PRO_1000114911" description="Phenylalanine--tRNA ligase alpha subunit">
    <location>
        <begin position="1"/>
        <end position="327"/>
    </location>
</feature>
<feature type="binding site" evidence="1">
    <location>
        <position position="252"/>
    </location>
    <ligand>
        <name>Mg(2+)</name>
        <dbReference type="ChEBI" id="CHEBI:18420"/>
        <note>shared with beta subunit</note>
    </ligand>
</feature>
<dbReference type="EC" id="6.1.1.20" evidence="1"/>
<dbReference type="EMBL" id="AM933173">
    <property type="protein sequence ID" value="CAR37637.1"/>
    <property type="molecule type" value="Genomic_DNA"/>
</dbReference>
<dbReference type="RefSeq" id="WP_000018570.1">
    <property type="nucleotide sequence ID" value="NC_011274.1"/>
</dbReference>
<dbReference type="SMR" id="B5RAW9"/>
<dbReference type="KEGG" id="seg:SG1780"/>
<dbReference type="HOGENOM" id="CLU_025086_0_1_6"/>
<dbReference type="Proteomes" id="UP000008321">
    <property type="component" value="Chromosome"/>
</dbReference>
<dbReference type="GO" id="GO:0005737">
    <property type="term" value="C:cytoplasm"/>
    <property type="evidence" value="ECO:0007669"/>
    <property type="project" value="UniProtKB-SubCell"/>
</dbReference>
<dbReference type="GO" id="GO:0005524">
    <property type="term" value="F:ATP binding"/>
    <property type="evidence" value="ECO:0007669"/>
    <property type="project" value="UniProtKB-UniRule"/>
</dbReference>
<dbReference type="GO" id="GO:0000287">
    <property type="term" value="F:magnesium ion binding"/>
    <property type="evidence" value="ECO:0007669"/>
    <property type="project" value="UniProtKB-UniRule"/>
</dbReference>
<dbReference type="GO" id="GO:0004826">
    <property type="term" value="F:phenylalanine-tRNA ligase activity"/>
    <property type="evidence" value="ECO:0007669"/>
    <property type="project" value="UniProtKB-UniRule"/>
</dbReference>
<dbReference type="GO" id="GO:0000049">
    <property type="term" value="F:tRNA binding"/>
    <property type="evidence" value="ECO:0007669"/>
    <property type="project" value="InterPro"/>
</dbReference>
<dbReference type="GO" id="GO:0006432">
    <property type="term" value="P:phenylalanyl-tRNA aminoacylation"/>
    <property type="evidence" value="ECO:0007669"/>
    <property type="project" value="UniProtKB-UniRule"/>
</dbReference>
<dbReference type="CDD" id="cd00496">
    <property type="entry name" value="PheRS_alpha_core"/>
    <property type="match status" value="1"/>
</dbReference>
<dbReference type="FunFam" id="3.30.930.10:FF:000003">
    <property type="entry name" value="Phenylalanine--tRNA ligase alpha subunit"/>
    <property type="match status" value="1"/>
</dbReference>
<dbReference type="Gene3D" id="3.30.930.10">
    <property type="entry name" value="Bira Bifunctional Protein, Domain 2"/>
    <property type="match status" value="1"/>
</dbReference>
<dbReference type="HAMAP" id="MF_00281">
    <property type="entry name" value="Phe_tRNA_synth_alpha1"/>
    <property type="match status" value="1"/>
</dbReference>
<dbReference type="InterPro" id="IPR006195">
    <property type="entry name" value="aa-tRNA-synth_II"/>
</dbReference>
<dbReference type="InterPro" id="IPR045864">
    <property type="entry name" value="aa-tRNA-synth_II/BPL/LPL"/>
</dbReference>
<dbReference type="InterPro" id="IPR004529">
    <property type="entry name" value="Phe-tRNA-synth_IIc_asu"/>
</dbReference>
<dbReference type="InterPro" id="IPR004188">
    <property type="entry name" value="Phe-tRNA_ligase_II_N"/>
</dbReference>
<dbReference type="InterPro" id="IPR022911">
    <property type="entry name" value="Phe_tRNA_ligase_alpha1_bac"/>
</dbReference>
<dbReference type="InterPro" id="IPR002319">
    <property type="entry name" value="Phenylalanyl-tRNA_Synthase"/>
</dbReference>
<dbReference type="InterPro" id="IPR010978">
    <property type="entry name" value="tRNA-bd_arm"/>
</dbReference>
<dbReference type="NCBIfam" id="TIGR00468">
    <property type="entry name" value="pheS"/>
    <property type="match status" value="1"/>
</dbReference>
<dbReference type="PANTHER" id="PTHR11538:SF41">
    <property type="entry name" value="PHENYLALANINE--TRNA LIGASE, MITOCHONDRIAL"/>
    <property type="match status" value="1"/>
</dbReference>
<dbReference type="PANTHER" id="PTHR11538">
    <property type="entry name" value="PHENYLALANYL-TRNA SYNTHETASE"/>
    <property type="match status" value="1"/>
</dbReference>
<dbReference type="Pfam" id="PF02912">
    <property type="entry name" value="Phe_tRNA-synt_N"/>
    <property type="match status" value="1"/>
</dbReference>
<dbReference type="Pfam" id="PF01409">
    <property type="entry name" value="tRNA-synt_2d"/>
    <property type="match status" value="1"/>
</dbReference>
<dbReference type="SUPFAM" id="SSF55681">
    <property type="entry name" value="Class II aaRS and biotin synthetases"/>
    <property type="match status" value="1"/>
</dbReference>
<dbReference type="SUPFAM" id="SSF46589">
    <property type="entry name" value="tRNA-binding arm"/>
    <property type="match status" value="1"/>
</dbReference>
<dbReference type="PROSITE" id="PS50862">
    <property type="entry name" value="AA_TRNA_LIGASE_II"/>
    <property type="match status" value="1"/>
</dbReference>
<gene>
    <name evidence="1" type="primary">pheS</name>
    <name type="ordered locus">SG1780</name>
</gene>
<protein>
    <recommendedName>
        <fullName evidence="1">Phenylalanine--tRNA ligase alpha subunit</fullName>
        <ecNumber evidence="1">6.1.1.20</ecNumber>
    </recommendedName>
    <alternativeName>
        <fullName evidence="1">Phenylalanyl-tRNA synthetase alpha subunit</fullName>
        <shortName evidence="1">PheRS</shortName>
    </alternativeName>
</protein>
<reference key="1">
    <citation type="journal article" date="2008" name="Genome Res.">
        <title>Comparative genome analysis of Salmonella enteritidis PT4 and Salmonella gallinarum 287/91 provides insights into evolutionary and host adaptation pathways.</title>
        <authorList>
            <person name="Thomson N.R."/>
            <person name="Clayton D.J."/>
            <person name="Windhorst D."/>
            <person name="Vernikos G."/>
            <person name="Davidson S."/>
            <person name="Churcher C."/>
            <person name="Quail M.A."/>
            <person name="Stevens M."/>
            <person name="Jones M.A."/>
            <person name="Watson M."/>
            <person name="Barron A."/>
            <person name="Layton A."/>
            <person name="Pickard D."/>
            <person name="Kingsley R.A."/>
            <person name="Bignell A."/>
            <person name="Clark L."/>
            <person name="Harris B."/>
            <person name="Ormond D."/>
            <person name="Abdellah Z."/>
            <person name="Brooks K."/>
            <person name="Cherevach I."/>
            <person name="Chillingworth T."/>
            <person name="Woodward J."/>
            <person name="Norberczak H."/>
            <person name="Lord A."/>
            <person name="Arrowsmith C."/>
            <person name="Jagels K."/>
            <person name="Moule S."/>
            <person name="Mungall K."/>
            <person name="Saunders M."/>
            <person name="Whitehead S."/>
            <person name="Chabalgoity J.A."/>
            <person name="Maskell D."/>
            <person name="Humphreys T."/>
            <person name="Roberts M."/>
            <person name="Barrow P.A."/>
            <person name="Dougan G."/>
            <person name="Parkhill J."/>
        </authorList>
    </citation>
    <scope>NUCLEOTIDE SEQUENCE [LARGE SCALE GENOMIC DNA]</scope>
    <source>
        <strain>287/91 / NCTC 13346</strain>
    </source>
</reference>
<keyword id="KW-0030">Aminoacyl-tRNA synthetase</keyword>
<keyword id="KW-0067">ATP-binding</keyword>
<keyword id="KW-0963">Cytoplasm</keyword>
<keyword id="KW-0436">Ligase</keyword>
<keyword id="KW-0460">Magnesium</keyword>
<keyword id="KW-0479">Metal-binding</keyword>
<keyword id="KW-0547">Nucleotide-binding</keyword>
<keyword id="KW-0648">Protein biosynthesis</keyword>
<organism>
    <name type="scientific">Salmonella gallinarum (strain 287/91 / NCTC 13346)</name>
    <dbReference type="NCBI Taxonomy" id="550538"/>
    <lineage>
        <taxon>Bacteria</taxon>
        <taxon>Pseudomonadati</taxon>
        <taxon>Pseudomonadota</taxon>
        <taxon>Gammaproteobacteria</taxon>
        <taxon>Enterobacterales</taxon>
        <taxon>Enterobacteriaceae</taxon>
        <taxon>Salmonella</taxon>
    </lineage>
</organism>
<accession>B5RAW9</accession>